<proteinExistence type="inferred from homology"/>
<dbReference type="EC" id="6.1.1.5" evidence="1"/>
<dbReference type="EMBL" id="BA000040">
    <property type="protein sequence ID" value="BAC52746.1"/>
    <property type="molecule type" value="Genomic_DNA"/>
</dbReference>
<dbReference type="RefSeq" id="NP_774121.1">
    <property type="nucleotide sequence ID" value="NC_004463.1"/>
</dbReference>
<dbReference type="RefSeq" id="WP_011090213.1">
    <property type="nucleotide sequence ID" value="NC_004463.1"/>
</dbReference>
<dbReference type="SMR" id="Q89DF8"/>
<dbReference type="FunCoup" id="Q89DF8">
    <property type="interactions" value="667"/>
</dbReference>
<dbReference type="STRING" id="224911.AAV28_35090"/>
<dbReference type="EnsemblBacteria" id="BAC52746">
    <property type="protein sequence ID" value="BAC52746"/>
    <property type="gene ID" value="BAC52746"/>
</dbReference>
<dbReference type="GeneID" id="46494438"/>
<dbReference type="KEGG" id="bja:blr7481"/>
<dbReference type="PATRIC" id="fig|224911.44.peg.7581"/>
<dbReference type="eggNOG" id="COG0060">
    <property type="taxonomic scope" value="Bacteria"/>
</dbReference>
<dbReference type="HOGENOM" id="CLU_001493_7_1_5"/>
<dbReference type="InParanoid" id="Q89DF8"/>
<dbReference type="OrthoDB" id="9810365at2"/>
<dbReference type="PhylomeDB" id="Q89DF8"/>
<dbReference type="Proteomes" id="UP000002526">
    <property type="component" value="Chromosome"/>
</dbReference>
<dbReference type="GO" id="GO:0005829">
    <property type="term" value="C:cytosol"/>
    <property type="evidence" value="ECO:0000318"/>
    <property type="project" value="GO_Central"/>
</dbReference>
<dbReference type="GO" id="GO:0002161">
    <property type="term" value="F:aminoacyl-tRNA deacylase activity"/>
    <property type="evidence" value="ECO:0007669"/>
    <property type="project" value="InterPro"/>
</dbReference>
<dbReference type="GO" id="GO:0005524">
    <property type="term" value="F:ATP binding"/>
    <property type="evidence" value="ECO:0007669"/>
    <property type="project" value="UniProtKB-UniRule"/>
</dbReference>
<dbReference type="GO" id="GO:0004822">
    <property type="term" value="F:isoleucine-tRNA ligase activity"/>
    <property type="evidence" value="ECO:0000318"/>
    <property type="project" value="GO_Central"/>
</dbReference>
<dbReference type="GO" id="GO:0000049">
    <property type="term" value="F:tRNA binding"/>
    <property type="evidence" value="ECO:0007669"/>
    <property type="project" value="InterPro"/>
</dbReference>
<dbReference type="GO" id="GO:0006428">
    <property type="term" value="P:isoleucyl-tRNA aminoacylation"/>
    <property type="evidence" value="ECO:0000318"/>
    <property type="project" value="GO_Central"/>
</dbReference>
<dbReference type="CDD" id="cd07960">
    <property type="entry name" value="Anticodon_Ia_Ile_BEm"/>
    <property type="match status" value="1"/>
</dbReference>
<dbReference type="FunFam" id="1.10.730.20:FF:000009">
    <property type="entry name" value="Isoleucine--tRNA ligase"/>
    <property type="match status" value="1"/>
</dbReference>
<dbReference type="FunFam" id="3.40.50.620:FF:000042">
    <property type="entry name" value="Isoleucine--tRNA ligase"/>
    <property type="match status" value="1"/>
</dbReference>
<dbReference type="FunFam" id="3.90.740.10:FF:000022">
    <property type="entry name" value="Isoleucine--tRNA ligase"/>
    <property type="match status" value="1"/>
</dbReference>
<dbReference type="Gene3D" id="1.10.730.20">
    <property type="match status" value="1"/>
</dbReference>
<dbReference type="Gene3D" id="3.40.50.620">
    <property type="entry name" value="HUPs"/>
    <property type="match status" value="2"/>
</dbReference>
<dbReference type="Gene3D" id="3.90.740.10">
    <property type="entry name" value="Valyl/Leucyl/Isoleucyl-tRNA synthetase, editing domain"/>
    <property type="match status" value="1"/>
</dbReference>
<dbReference type="HAMAP" id="MF_02002">
    <property type="entry name" value="Ile_tRNA_synth_type1"/>
    <property type="match status" value="1"/>
</dbReference>
<dbReference type="InterPro" id="IPR001412">
    <property type="entry name" value="aa-tRNA-synth_I_CS"/>
</dbReference>
<dbReference type="InterPro" id="IPR002300">
    <property type="entry name" value="aa-tRNA-synth_Ia"/>
</dbReference>
<dbReference type="InterPro" id="IPR033708">
    <property type="entry name" value="Anticodon_Ile_BEm"/>
</dbReference>
<dbReference type="InterPro" id="IPR002301">
    <property type="entry name" value="Ile-tRNA-ligase"/>
</dbReference>
<dbReference type="InterPro" id="IPR023585">
    <property type="entry name" value="Ile-tRNA-ligase_type1"/>
</dbReference>
<dbReference type="InterPro" id="IPR050081">
    <property type="entry name" value="Ile-tRNA_ligase"/>
</dbReference>
<dbReference type="InterPro" id="IPR013155">
    <property type="entry name" value="M/V/L/I-tRNA-synth_anticd-bd"/>
</dbReference>
<dbReference type="InterPro" id="IPR014729">
    <property type="entry name" value="Rossmann-like_a/b/a_fold"/>
</dbReference>
<dbReference type="InterPro" id="IPR009080">
    <property type="entry name" value="tRNAsynth_Ia_anticodon-bd"/>
</dbReference>
<dbReference type="InterPro" id="IPR009008">
    <property type="entry name" value="Val/Leu/Ile-tRNA-synth_edit"/>
</dbReference>
<dbReference type="NCBIfam" id="TIGR00392">
    <property type="entry name" value="ileS"/>
    <property type="match status" value="1"/>
</dbReference>
<dbReference type="PANTHER" id="PTHR42765:SF1">
    <property type="entry name" value="ISOLEUCINE--TRNA LIGASE, MITOCHONDRIAL"/>
    <property type="match status" value="1"/>
</dbReference>
<dbReference type="PANTHER" id="PTHR42765">
    <property type="entry name" value="SOLEUCYL-TRNA SYNTHETASE"/>
    <property type="match status" value="1"/>
</dbReference>
<dbReference type="Pfam" id="PF08264">
    <property type="entry name" value="Anticodon_1"/>
    <property type="match status" value="1"/>
</dbReference>
<dbReference type="Pfam" id="PF00133">
    <property type="entry name" value="tRNA-synt_1"/>
    <property type="match status" value="1"/>
</dbReference>
<dbReference type="PRINTS" id="PR00984">
    <property type="entry name" value="TRNASYNTHILE"/>
</dbReference>
<dbReference type="SUPFAM" id="SSF47323">
    <property type="entry name" value="Anticodon-binding domain of a subclass of class I aminoacyl-tRNA synthetases"/>
    <property type="match status" value="1"/>
</dbReference>
<dbReference type="SUPFAM" id="SSF52374">
    <property type="entry name" value="Nucleotidylyl transferase"/>
    <property type="match status" value="1"/>
</dbReference>
<dbReference type="SUPFAM" id="SSF50677">
    <property type="entry name" value="ValRS/IleRS/LeuRS editing domain"/>
    <property type="match status" value="1"/>
</dbReference>
<dbReference type="PROSITE" id="PS00178">
    <property type="entry name" value="AA_TRNA_LIGASE_I"/>
    <property type="match status" value="1"/>
</dbReference>
<protein>
    <recommendedName>
        <fullName evidence="1">Isoleucine--tRNA ligase</fullName>
        <ecNumber evidence="1">6.1.1.5</ecNumber>
    </recommendedName>
    <alternativeName>
        <fullName evidence="1">Isoleucyl-tRNA synthetase</fullName>
        <shortName evidence="1">IleRS</shortName>
    </alternativeName>
</protein>
<feature type="chain" id="PRO_0000098360" description="Isoleucine--tRNA ligase">
    <location>
        <begin position="1"/>
        <end position="1002"/>
    </location>
</feature>
<feature type="short sequence motif" description="'HIGH' region">
    <location>
        <begin position="70"/>
        <end position="80"/>
    </location>
</feature>
<feature type="short sequence motif" description="'KMSKS' region">
    <location>
        <begin position="671"/>
        <end position="675"/>
    </location>
</feature>
<feature type="binding site" evidence="1">
    <location>
        <position position="630"/>
    </location>
    <ligand>
        <name>L-isoleucyl-5'-AMP</name>
        <dbReference type="ChEBI" id="CHEBI:178002"/>
    </ligand>
</feature>
<feature type="binding site" evidence="1">
    <location>
        <position position="674"/>
    </location>
    <ligand>
        <name>ATP</name>
        <dbReference type="ChEBI" id="CHEBI:30616"/>
    </ligand>
</feature>
<sequence length="1002" mass="112383">MSEKPQKSQKSEVKDYSKTLFLPQTEFPMRAGLPQREPEILKYWNDIGLYDRLRQEAEGRTKFVLHDGPPYANGNIHIGHALNKILKDVVTKSQQMLGFDSNYVPGWDCHGLPIEWKIEEENYRKKGKQKPDFRDSAAMVAFRKECRAYATHWINVQREEFKRLGIIGDWDHPYQTMSYPAEAQIARELMKFAANGTLYRGSKPVMWSVVEKTALAEAEVEYEDYTSDMVWVKFPVTSPAHGALASASVVIWTTTPWTLPGNRAISFSPKIAYGLYKVTDAPADNWAKTGDLLILADALAAEVFKQARVTTYEKVRELPADTLDAVECAHPLKGFSGGYEFTVPLLPGDHVTDDTGTGFVHTAPGHGREDFDVWMANARELEARGINTTIPYTVDENGAFTDHAPGFVGKRVINDKGEKGDANEAVIKALIDAGKLLARGRLKHQYPHSWRSKKPVIFRNTPQWFIAMDKDISANGHAKKGDTLRARALHAISVTQWVPPSGENRINGMIANRPDWVISRQRAWGVPIAVFVREKSDGSAEILQDEIVNQRIAEAFMEEGADAWYMDGARERFLGSRASEDWKKVDDICDVWFDSGSTHAFVLEDRQNFPQLGNIVRKVDGGSDTVMYLEGSDQHRGWFHSSLLESAGTRGRAPYDIVLTHGFTLDENGRKMSKSLGNTVEPQKVIKDSGADILRLWVCATDYADDQRIGPEILKNTIETYRKLRNSIRWMLGTLHHFKPSEKVAYAEMPELERLMLHELAGHAETVRNAYAAFDYKTVVASLAAFMNSELSAFYFDIRKDTLYCDPPSSPARKAALTTIDLLCDAILKWLAPILSFTTDEAWRMFRPNAEPSVHLTLFPADIEKLRDDKLAAKWETIRNVRRAVTGALELERAAKNIGSSLEASPVIYVADRDMLATLFDTDLAEVCITSNYEVRESEAPASAFRLDAVPGVAVVVEKAVGTKCARSWKISQTVGEDPEYPDVTPRDAQALREWKALGVGV</sequence>
<accession>Q89DF8</accession>
<keyword id="KW-0030">Aminoacyl-tRNA synthetase</keyword>
<keyword id="KW-0067">ATP-binding</keyword>
<keyword id="KW-0963">Cytoplasm</keyword>
<keyword id="KW-0436">Ligase</keyword>
<keyword id="KW-0547">Nucleotide-binding</keyword>
<keyword id="KW-0648">Protein biosynthesis</keyword>
<keyword id="KW-1185">Reference proteome</keyword>
<comment type="function">
    <text evidence="1">Catalyzes the attachment of isoleucine to tRNA(Ile). As IleRS can inadvertently accommodate and process structurally similar amino acids such as valine, to avoid such errors it has two additional distinct tRNA(Ile)-dependent editing activities. One activity is designated as 'pretransfer' editing and involves the hydrolysis of activated Val-AMP. The other activity is designated 'posttransfer' editing and involves deacylation of mischarged Val-tRNA(Ile).</text>
</comment>
<comment type="catalytic activity">
    <reaction evidence="1">
        <text>tRNA(Ile) + L-isoleucine + ATP = L-isoleucyl-tRNA(Ile) + AMP + diphosphate</text>
        <dbReference type="Rhea" id="RHEA:11060"/>
        <dbReference type="Rhea" id="RHEA-COMP:9666"/>
        <dbReference type="Rhea" id="RHEA-COMP:9695"/>
        <dbReference type="ChEBI" id="CHEBI:30616"/>
        <dbReference type="ChEBI" id="CHEBI:33019"/>
        <dbReference type="ChEBI" id="CHEBI:58045"/>
        <dbReference type="ChEBI" id="CHEBI:78442"/>
        <dbReference type="ChEBI" id="CHEBI:78528"/>
        <dbReference type="ChEBI" id="CHEBI:456215"/>
        <dbReference type="EC" id="6.1.1.5"/>
    </reaction>
</comment>
<comment type="subunit">
    <text evidence="1">Monomer.</text>
</comment>
<comment type="subcellular location">
    <subcellularLocation>
        <location evidence="1">Cytoplasm</location>
    </subcellularLocation>
</comment>
<comment type="domain">
    <text evidence="1">IleRS has two distinct active sites: one for aminoacylation and one for editing. The misactivated valine is translocated from the active site to the editing site, which sterically excludes the correctly activated isoleucine. The single editing site contains two valyl binding pockets, one specific for each substrate (Val-AMP or Val-tRNA(Ile)).</text>
</comment>
<comment type="similarity">
    <text evidence="1">Belongs to the class-I aminoacyl-tRNA synthetase family. IleS type 1 subfamily.</text>
</comment>
<evidence type="ECO:0000255" key="1">
    <source>
        <dbReference type="HAMAP-Rule" id="MF_02002"/>
    </source>
</evidence>
<reference key="1">
    <citation type="journal article" date="2002" name="DNA Res.">
        <title>Complete genomic sequence of nitrogen-fixing symbiotic bacterium Bradyrhizobium japonicum USDA110.</title>
        <authorList>
            <person name="Kaneko T."/>
            <person name="Nakamura Y."/>
            <person name="Sato S."/>
            <person name="Minamisawa K."/>
            <person name="Uchiumi T."/>
            <person name="Sasamoto S."/>
            <person name="Watanabe A."/>
            <person name="Idesawa K."/>
            <person name="Iriguchi M."/>
            <person name="Kawashima K."/>
            <person name="Kohara M."/>
            <person name="Matsumoto M."/>
            <person name="Shimpo S."/>
            <person name="Tsuruoka H."/>
            <person name="Wada T."/>
            <person name="Yamada M."/>
            <person name="Tabata S."/>
        </authorList>
    </citation>
    <scope>NUCLEOTIDE SEQUENCE [LARGE SCALE GENOMIC DNA]</scope>
    <source>
        <strain>JCM 10833 / BCRC 13528 / IAM 13628 / NBRC 14792 / USDA 110</strain>
    </source>
</reference>
<name>SYI_BRADU</name>
<organism>
    <name type="scientific">Bradyrhizobium diazoefficiens (strain JCM 10833 / BCRC 13528 / IAM 13628 / NBRC 14792 / USDA 110)</name>
    <dbReference type="NCBI Taxonomy" id="224911"/>
    <lineage>
        <taxon>Bacteria</taxon>
        <taxon>Pseudomonadati</taxon>
        <taxon>Pseudomonadota</taxon>
        <taxon>Alphaproteobacteria</taxon>
        <taxon>Hyphomicrobiales</taxon>
        <taxon>Nitrobacteraceae</taxon>
        <taxon>Bradyrhizobium</taxon>
    </lineage>
</organism>
<gene>
    <name evidence="1" type="primary">ileS</name>
    <name type="ordered locus">blr7481</name>
</gene>